<proteinExistence type="inferred from homology"/>
<gene>
    <name evidence="1" type="primary">rplT</name>
    <name type="ordered locus">CD630_06870</name>
</gene>
<name>RL20_CLOD6</name>
<protein>
    <recommendedName>
        <fullName evidence="1">Large ribosomal subunit protein bL20</fullName>
    </recommendedName>
    <alternativeName>
        <fullName evidence="2">50S ribosomal protein L20</fullName>
    </alternativeName>
</protein>
<accession>Q189N4</accession>
<sequence>MARVKKAMNARKKHKKILKLAKGFRGSRSKLYRPANTFVMKALKNAYIGRKLKKRDFRKLWIQRINAAARMNGISYSRLMNGLKLSGVEVNRKMLSEMAIQDPEGFAKLAEVAKAKLA</sequence>
<comment type="function">
    <text evidence="1">Binds directly to 23S ribosomal RNA and is necessary for the in vitro assembly process of the 50S ribosomal subunit. It is not involved in the protein synthesizing functions of that subunit.</text>
</comment>
<comment type="similarity">
    <text evidence="1">Belongs to the bacterial ribosomal protein bL20 family.</text>
</comment>
<evidence type="ECO:0000255" key="1">
    <source>
        <dbReference type="HAMAP-Rule" id="MF_00382"/>
    </source>
</evidence>
<evidence type="ECO:0000305" key="2"/>
<organism>
    <name type="scientific">Clostridioides difficile (strain 630)</name>
    <name type="common">Peptoclostridium difficile</name>
    <dbReference type="NCBI Taxonomy" id="272563"/>
    <lineage>
        <taxon>Bacteria</taxon>
        <taxon>Bacillati</taxon>
        <taxon>Bacillota</taxon>
        <taxon>Clostridia</taxon>
        <taxon>Peptostreptococcales</taxon>
        <taxon>Peptostreptococcaceae</taxon>
        <taxon>Clostridioides</taxon>
    </lineage>
</organism>
<dbReference type="EMBL" id="AM180355">
    <property type="protein sequence ID" value="CAJ67520.1"/>
    <property type="molecule type" value="Genomic_DNA"/>
</dbReference>
<dbReference type="RefSeq" id="WP_003429730.1">
    <property type="nucleotide sequence ID" value="NZ_JAUPES010000005.1"/>
</dbReference>
<dbReference type="RefSeq" id="YP_001087163.1">
    <property type="nucleotide sequence ID" value="NC_009089.1"/>
</dbReference>
<dbReference type="SMR" id="Q189N4"/>
<dbReference type="STRING" id="272563.CD630_06870"/>
<dbReference type="DNASU" id="4914279"/>
<dbReference type="EnsemblBacteria" id="CAJ67520">
    <property type="protein sequence ID" value="CAJ67520"/>
    <property type="gene ID" value="CD630_06870"/>
</dbReference>
<dbReference type="GeneID" id="66353188"/>
<dbReference type="KEGG" id="cdf:CD630_06870"/>
<dbReference type="KEGG" id="pdc:CDIF630_00800"/>
<dbReference type="PATRIC" id="fig|272563.120.peg.706"/>
<dbReference type="eggNOG" id="COG0292">
    <property type="taxonomic scope" value="Bacteria"/>
</dbReference>
<dbReference type="OrthoDB" id="9808966at2"/>
<dbReference type="PhylomeDB" id="Q189N4"/>
<dbReference type="BioCyc" id="PDIF272563:G12WB-796-MONOMER"/>
<dbReference type="Proteomes" id="UP000001978">
    <property type="component" value="Chromosome"/>
</dbReference>
<dbReference type="GO" id="GO:1990904">
    <property type="term" value="C:ribonucleoprotein complex"/>
    <property type="evidence" value="ECO:0007669"/>
    <property type="project" value="UniProtKB-KW"/>
</dbReference>
<dbReference type="GO" id="GO:0005840">
    <property type="term" value="C:ribosome"/>
    <property type="evidence" value="ECO:0007669"/>
    <property type="project" value="UniProtKB-KW"/>
</dbReference>
<dbReference type="GO" id="GO:0019843">
    <property type="term" value="F:rRNA binding"/>
    <property type="evidence" value="ECO:0007669"/>
    <property type="project" value="UniProtKB-UniRule"/>
</dbReference>
<dbReference type="GO" id="GO:0003735">
    <property type="term" value="F:structural constituent of ribosome"/>
    <property type="evidence" value="ECO:0007669"/>
    <property type="project" value="InterPro"/>
</dbReference>
<dbReference type="GO" id="GO:0000027">
    <property type="term" value="P:ribosomal large subunit assembly"/>
    <property type="evidence" value="ECO:0007669"/>
    <property type="project" value="UniProtKB-UniRule"/>
</dbReference>
<dbReference type="GO" id="GO:0006412">
    <property type="term" value="P:translation"/>
    <property type="evidence" value="ECO:0007669"/>
    <property type="project" value="InterPro"/>
</dbReference>
<dbReference type="CDD" id="cd07026">
    <property type="entry name" value="Ribosomal_L20"/>
    <property type="match status" value="1"/>
</dbReference>
<dbReference type="FunFam" id="1.10.1900.20:FF:000001">
    <property type="entry name" value="50S ribosomal protein L20"/>
    <property type="match status" value="1"/>
</dbReference>
<dbReference type="Gene3D" id="6.10.160.10">
    <property type="match status" value="1"/>
</dbReference>
<dbReference type="Gene3D" id="1.10.1900.20">
    <property type="entry name" value="Ribosomal protein L20"/>
    <property type="match status" value="1"/>
</dbReference>
<dbReference type="HAMAP" id="MF_00382">
    <property type="entry name" value="Ribosomal_bL20"/>
    <property type="match status" value="1"/>
</dbReference>
<dbReference type="InterPro" id="IPR005813">
    <property type="entry name" value="Ribosomal_bL20"/>
</dbReference>
<dbReference type="InterPro" id="IPR049946">
    <property type="entry name" value="RIBOSOMAL_L20_CS"/>
</dbReference>
<dbReference type="InterPro" id="IPR035566">
    <property type="entry name" value="Ribosomal_protein_bL20_C"/>
</dbReference>
<dbReference type="NCBIfam" id="TIGR01032">
    <property type="entry name" value="rplT_bact"/>
    <property type="match status" value="1"/>
</dbReference>
<dbReference type="PANTHER" id="PTHR10986">
    <property type="entry name" value="39S RIBOSOMAL PROTEIN L20"/>
    <property type="match status" value="1"/>
</dbReference>
<dbReference type="Pfam" id="PF00453">
    <property type="entry name" value="Ribosomal_L20"/>
    <property type="match status" value="1"/>
</dbReference>
<dbReference type="PRINTS" id="PR00062">
    <property type="entry name" value="RIBOSOMALL20"/>
</dbReference>
<dbReference type="SUPFAM" id="SSF74731">
    <property type="entry name" value="Ribosomal protein L20"/>
    <property type="match status" value="1"/>
</dbReference>
<dbReference type="PROSITE" id="PS00937">
    <property type="entry name" value="RIBOSOMAL_L20"/>
    <property type="match status" value="1"/>
</dbReference>
<feature type="chain" id="PRO_1000048960" description="Large ribosomal subunit protein bL20">
    <location>
        <begin position="1"/>
        <end position="118"/>
    </location>
</feature>
<reference key="1">
    <citation type="journal article" date="2006" name="Nat. Genet.">
        <title>The multidrug-resistant human pathogen Clostridium difficile has a highly mobile, mosaic genome.</title>
        <authorList>
            <person name="Sebaihia M."/>
            <person name="Wren B.W."/>
            <person name="Mullany P."/>
            <person name="Fairweather N.F."/>
            <person name="Minton N."/>
            <person name="Stabler R."/>
            <person name="Thomson N.R."/>
            <person name="Roberts A.P."/>
            <person name="Cerdeno-Tarraga A.M."/>
            <person name="Wang H."/>
            <person name="Holden M.T.G."/>
            <person name="Wright A."/>
            <person name="Churcher C."/>
            <person name="Quail M.A."/>
            <person name="Baker S."/>
            <person name="Bason N."/>
            <person name="Brooks K."/>
            <person name="Chillingworth T."/>
            <person name="Cronin A."/>
            <person name="Davis P."/>
            <person name="Dowd L."/>
            <person name="Fraser A."/>
            <person name="Feltwell T."/>
            <person name="Hance Z."/>
            <person name="Holroyd S."/>
            <person name="Jagels K."/>
            <person name="Moule S."/>
            <person name="Mungall K."/>
            <person name="Price C."/>
            <person name="Rabbinowitsch E."/>
            <person name="Sharp S."/>
            <person name="Simmonds M."/>
            <person name="Stevens K."/>
            <person name="Unwin L."/>
            <person name="Whithead S."/>
            <person name="Dupuy B."/>
            <person name="Dougan G."/>
            <person name="Barrell B."/>
            <person name="Parkhill J."/>
        </authorList>
    </citation>
    <scope>NUCLEOTIDE SEQUENCE [LARGE SCALE GENOMIC DNA]</scope>
    <source>
        <strain>630</strain>
    </source>
</reference>
<keyword id="KW-1185">Reference proteome</keyword>
<keyword id="KW-0687">Ribonucleoprotein</keyword>
<keyword id="KW-0689">Ribosomal protein</keyword>
<keyword id="KW-0694">RNA-binding</keyword>
<keyword id="KW-0699">rRNA-binding</keyword>